<keyword id="KW-0998">Cell outer membrane</keyword>
<keyword id="KW-0143">Chaperone</keyword>
<keyword id="KW-0449">Lipoprotein</keyword>
<keyword id="KW-0472">Membrane</keyword>
<keyword id="KW-0564">Palmitate</keyword>
<keyword id="KW-0653">Protein transport</keyword>
<keyword id="KW-1185">Reference proteome</keyword>
<keyword id="KW-0732">Signal</keyword>
<keyword id="KW-0813">Transport</keyword>
<gene>
    <name evidence="1" type="primary">lolB</name>
    <name type="ordered locus">Rmet_0291</name>
</gene>
<reference key="1">
    <citation type="journal article" date="2010" name="PLoS ONE">
        <title>The complete genome sequence of Cupriavidus metallidurans strain CH34, a master survivalist in harsh and anthropogenic environments.</title>
        <authorList>
            <person name="Janssen P.J."/>
            <person name="Van Houdt R."/>
            <person name="Moors H."/>
            <person name="Monsieurs P."/>
            <person name="Morin N."/>
            <person name="Michaux A."/>
            <person name="Benotmane M.A."/>
            <person name="Leys N."/>
            <person name="Vallaeys T."/>
            <person name="Lapidus A."/>
            <person name="Monchy S."/>
            <person name="Medigue C."/>
            <person name="Taghavi S."/>
            <person name="McCorkle S."/>
            <person name="Dunn J."/>
            <person name="van der Lelie D."/>
            <person name="Mergeay M."/>
        </authorList>
    </citation>
    <scope>NUCLEOTIDE SEQUENCE [LARGE SCALE GENOMIC DNA]</scope>
    <source>
        <strain>ATCC 43123 / DSM 2839 / NBRC 102507 / CH34</strain>
    </source>
</reference>
<feature type="signal peptide" evidence="1">
    <location>
        <begin position="1"/>
        <end position="20"/>
    </location>
</feature>
<feature type="chain" id="PRO_1000021675" description="Outer-membrane lipoprotein LolB">
    <location>
        <begin position="21"/>
        <end position="204"/>
    </location>
</feature>
<feature type="region of interest" description="Disordered" evidence="2">
    <location>
        <begin position="131"/>
        <end position="150"/>
    </location>
</feature>
<feature type="lipid moiety-binding region" description="N-palmitoyl cysteine" evidence="1">
    <location>
        <position position="21"/>
    </location>
</feature>
<feature type="lipid moiety-binding region" description="S-diacylglycerol cysteine" evidence="1">
    <location>
        <position position="21"/>
    </location>
</feature>
<sequence>MLRSRRLALLCLATPLWLAACASVTPTRGFDASETAASQLYTGRFSANYVRYGRNEGVQGSFRWQEQGRNVRLDLVSPLGQTLAIVTATPSGATLDLPNEAPRNAPEVDSLMEQALGFSLPVSGMRDWLHGRAAPGTPSNVTRDANGRPDTLRQSGWTVRYLAWQDTPENATPTTTLPRRIDMARDGNESPLSVRLVIDPENKE</sequence>
<accession>Q1LRP9</accession>
<protein>
    <recommendedName>
        <fullName evidence="1">Outer-membrane lipoprotein LolB</fullName>
    </recommendedName>
</protein>
<proteinExistence type="inferred from homology"/>
<organism>
    <name type="scientific">Cupriavidus metallidurans (strain ATCC 43123 / DSM 2839 / NBRC 102507 / CH34)</name>
    <name type="common">Ralstonia metallidurans</name>
    <dbReference type="NCBI Taxonomy" id="266264"/>
    <lineage>
        <taxon>Bacteria</taxon>
        <taxon>Pseudomonadati</taxon>
        <taxon>Pseudomonadota</taxon>
        <taxon>Betaproteobacteria</taxon>
        <taxon>Burkholderiales</taxon>
        <taxon>Burkholderiaceae</taxon>
        <taxon>Cupriavidus</taxon>
    </lineage>
</organism>
<dbReference type="EMBL" id="CP000352">
    <property type="protein sequence ID" value="ABF07177.1"/>
    <property type="molecule type" value="Genomic_DNA"/>
</dbReference>
<dbReference type="RefSeq" id="WP_011515179.1">
    <property type="nucleotide sequence ID" value="NC_007973.1"/>
</dbReference>
<dbReference type="SMR" id="Q1LRP9"/>
<dbReference type="STRING" id="266264.Rmet_0291"/>
<dbReference type="KEGG" id="rme:Rmet_0291"/>
<dbReference type="eggNOG" id="COG3017">
    <property type="taxonomic scope" value="Bacteria"/>
</dbReference>
<dbReference type="HOGENOM" id="CLU_092816_3_0_4"/>
<dbReference type="Proteomes" id="UP000002429">
    <property type="component" value="Chromosome"/>
</dbReference>
<dbReference type="GO" id="GO:0009279">
    <property type="term" value="C:cell outer membrane"/>
    <property type="evidence" value="ECO:0007669"/>
    <property type="project" value="UniProtKB-SubCell"/>
</dbReference>
<dbReference type="GO" id="GO:0044874">
    <property type="term" value="P:lipoprotein localization to outer membrane"/>
    <property type="evidence" value="ECO:0007669"/>
    <property type="project" value="UniProtKB-UniRule"/>
</dbReference>
<dbReference type="GO" id="GO:0015031">
    <property type="term" value="P:protein transport"/>
    <property type="evidence" value="ECO:0007669"/>
    <property type="project" value="UniProtKB-KW"/>
</dbReference>
<dbReference type="CDD" id="cd16326">
    <property type="entry name" value="LolB"/>
    <property type="match status" value="1"/>
</dbReference>
<dbReference type="Gene3D" id="2.50.20.10">
    <property type="entry name" value="Lipoprotein localisation LolA/LolB/LppX"/>
    <property type="match status" value="1"/>
</dbReference>
<dbReference type="HAMAP" id="MF_00233">
    <property type="entry name" value="LolB"/>
    <property type="match status" value="1"/>
</dbReference>
<dbReference type="InterPro" id="IPR029046">
    <property type="entry name" value="LolA/LolB/LppX"/>
</dbReference>
<dbReference type="InterPro" id="IPR004565">
    <property type="entry name" value="OM_lipoprot_LolB"/>
</dbReference>
<dbReference type="NCBIfam" id="TIGR00548">
    <property type="entry name" value="lolB"/>
    <property type="match status" value="1"/>
</dbReference>
<dbReference type="Pfam" id="PF03550">
    <property type="entry name" value="LolB"/>
    <property type="match status" value="1"/>
</dbReference>
<dbReference type="SUPFAM" id="SSF89392">
    <property type="entry name" value="Prokaryotic lipoproteins and lipoprotein localization factors"/>
    <property type="match status" value="1"/>
</dbReference>
<dbReference type="PROSITE" id="PS51257">
    <property type="entry name" value="PROKAR_LIPOPROTEIN"/>
    <property type="match status" value="1"/>
</dbReference>
<evidence type="ECO:0000255" key="1">
    <source>
        <dbReference type="HAMAP-Rule" id="MF_00233"/>
    </source>
</evidence>
<evidence type="ECO:0000256" key="2">
    <source>
        <dbReference type="SAM" id="MobiDB-lite"/>
    </source>
</evidence>
<name>LOLB_CUPMC</name>
<comment type="function">
    <text evidence="1">Plays a critical role in the incorporation of lipoproteins in the outer membrane after they are released by the LolA protein.</text>
</comment>
<comment type="subunit">
    <text evidence="1">Monomer.</text>
</comment>
<comment type="subcellular location">
    <subcellularLocation>
        <location evidence="1">Cell outer membrane</location>
        <topology evidence="1">Lipid-anchor</topology>
    </subcellularLocation>
</comment>
<comment type="similarity">
    <text evidence="1">Belongs to the LolB family.</text>
</comment>